<accession>P39231</accession>
<reference key="1">
    <citation type="journal article" date="1993" name="J. Virol.">
        <title>Analysis of five presumptive protein-coding sequences clustered between the primosome genes, 41 and 61, of bacteriophages T4, T2, and T6.</title>
        <authorList>
            <person name="Selick H.E."/>
            <person name="Stormo G.D."/>
            <person name="Dyson R.L."/>
            <person name="Alberts B.M."/>
        </authorList>
    </citation>
    <scope>NUCLEOTIDE SEQUENCE [GENOMIC DNA]</scope>
</reference>
<reference key="2">
    <citation type="journal article" date="2003" name="Microbiol. Mol. Biol. Rev.">
        <title>Bacteriophage T4 genome.</title>
        <authorList>
            <person name="Miller E.S."/>
            <person name="Kutter E."/>
            <person name="Mosig G."/>
            <person name="Arisaka F."/>
            <person name="Kunisawa T."/>
            <person name="Ruger W."/>
        </authorList>
    </citation>
    <scope>NUCLEOTIDE SEQUENCE [LARGE SCALE GENOMIC DNA]</scope>
</reference>
<keyword id="KW-1185">Reference proteome</keyword>
<protein>
    <recommendedName>
        <fullName>Uncharacterized 10.2 kDa protein in sp-Gp41 intergenic region</fullName>
    </recommendedName>
</protein>
<feature type="chain" id="PRO_0000165094" description="Uncharacterized 10.2 kDa protein in sp-Gp41 intergenic region">
    <location>
        <begin position="1"/>
        <end position="85"/>
    </location>
</feature>
<sequence length="85" mass="10187">MHIVLFKPTPYNVRKNTQFKALIADTWELVLDIPAEESPPFGRVEFIKFAVRPTKRQIRQCKRYFRKIVKLEKQFVTCDYAEILK</sequence>
<proteinExistence type="predicted"/>
<name>Y02A_BPT4</name>
<organismHost>
    <name type="scientific">Escherichia coli</name>
    <dbReference type="NCBI Taxonomy" id="562"/>
</organismHost>
<dbReference type="EMBL" id="S57514">
    <property type="protein sequence ID" value="AAB25709.1"/>
    <property type="molecule type" value="Genomic_DNA"/>
</dbReference>
<dbReference type="EMBL" id="AF158101">
    <property type="protein sequence ID" value="AAD42511.1"/>
    <property type="molecule type" value="Genomic_DNA"/>
</dbReference>
<dbReference type="PIR" id="B45681">
    <property type="entry name" value="B45681"/>
</dbReference>
<dbReference type="RefSeq" id="NP_049652.1">
    <property type="nucleotide sequence ID" value="NC_000866.4"/>
</dbReference>
<dbReference type="GeneID" id="1258667"/>
<dbReference type="KEGG" id="vg:1258667"/>
<dbReference type="OrthoDB" id="22098at10239"/>
<dbReference type="Proteomes" id="UP000009087">
    <property type="component" value="Segment"/>
</dbReference>
<dbReference type="InterPro" id="IPR055703">
    <property type="entry name" value="DUF7279"/>
</dbReference>
<dbReference type="Pfam" id="PF23945">
    <property type="entry name" value="DUF7279"/>
    <property type="match status" value="1"/>
</dbReference>
<gene>
    <name type="primary">y02A</name>
    <name type="synonym">61.4</name>
</gene>
<organism>
    <name type="scientific">Enterobacteria phage T4</name>
    <name type="common">Bacteriophage T4</name>
    <dbReference type="NCBI Taxonomy" id="10665"/>
    <lineage>
        <taxon>Viruses</taxon>
        <taxon>Duplodnaviria</taxon>
        <taxon>Heunggongvirae</taxon>
        <taxon>Uroviricota</taxon>
        <taxon>Caudoviricetes</taxon>
        <taxon>Straboviridae</taxon>
        <taxon>Tevenvirinae</taxon>
        <taxon>Tequatrovirus</taxon>
    </lineage>
</organism>